<keyword id="KW-0963">Cytoplasm</keyword>
<keyword id="KW-0456">Lyase</keyword>
<keyword id="KW-1185">Reference proteome</keyword>
<keyword id="KW-0704">Schiff base</keyword>
<protein>
    <recommendedName>
        <fullName evidence="1">Deoxyribose-phosphate aldolase 1</fullName>
        <shortName evidence="1">DERA 1</shortName>
        <ecNumber evidence="1">4.1.2.4</ecNumber>
    </recommendedName>
    <alternativeName>
        <fullName evidence="1">2-deoxy-D-ribose 5-phosphate aldolase 1</fullName>
    </alternativeName>
    <alternativeName>
        <fullName evidence="1">Phosphodeoxyriboaldolase 1</fullName>
        <shortName evidence="1">Deoxyriboaldolase 1</shortName>
    </alternativeName>
</protein>
<comment type="function">
    <text evidence="1">Catalyzes a reversible aldol reaction between acetaldehyde and D-glyceraldehyde 3-phosphate to generate 2-deoxy-D-ribose 5-phosphate.</text>
</comment>
<comment type="catalytic activity">
    <reaction evidence="1">
        <text>2-deoxy-D-ribose 5-phosphate = D-glyceraldehyde 3-phosphate + acetaldehyde</text>
        <dbReference type="Rhea" id="RHEA:12821"/>
        <dbReference type="ChEBI" id="CHEBI:15343"/>
        <dbReference type="ChEBI" id="CHEBI:59776"/>
        <dbReference type="ChEBI" id="CHEBI:62877"/>
        <dbReference type="EC" id="4.1.2.4"/>
    </reaction>
</comment>
<comment type="pathway">
    <text evidence="1">Carbohydrate degradation; 2-deoxy-D-ribose 1-phosphate degradation; D-glyceraldehyde 3-phosphate and acetaldehyde from 2-deoxy-alpha-D-ribose 1-phosphate: step 2/2.</text>
</comment>
<comment type="subcellular location">
    <subcellularLocation>
        <location evidence="1">Cytoplasm</location>
    </subcellularLocation>
</comment>
<comment type="similarity">
    <text evidence="1 2">Belongs to the DeoC/FbaB aldolase family. DeoC type 1 subfamily.</text>
</comment>
<proteinExistence type="inferred from homology"/>
<accession>Q8ZGH4</accession>
<accession>Q0WH90</accession>
<name>DEOC1_YERPE</name>
<organism>
    <name type="scientific">Yersinia pestis</name>
    <dbReference type="NCBI Taxonomy" id="632"/>
    <lineage>
        <taxon>Bacteria</taxon>
        <taxon>Pseudomonadati</taxon>
        <taxon>Pseudomonadota</taxon>
        <taxon>Gammaproteobacteria</taxon>
        <taxon>Enterobacterales</taxon>
        <taxon>Yersiniaceae</taxon>
        <taxon>Yersinia</taxon>
    </lineage>
</organism>
<reference key="1">
    <citation type="journal article" date="2001" name="Nature">
        <title>Genome sequence of Yersinia pestis, the causative agent of plague.</title>
        <authorList>
            <person name="Parkhill J."/>
            <person name="Wren B.W."/>
            <person name="Thomson N.R."/>
            <person name="Titball R.W."/>
            <person name="Holden M.T.G."/>
            <person name="Prentice M.B."/>
            <person name="Sebaihia M."/>
            <person name="James K.D."/>
            <person name="Churcher C.M."/>
            <person name="Mungall K.L."/>
            <person name="Baker S."/>
            <person name="Basham D."/>
            <person name="Bentley S.D."/>
            <person name="Brooks K."/>
            <person name="Cerdeno-Tarraga A.-M."/>
            <person name="Chillingworth T."/>
            <person name="Cronin A."/>
            <person name="Davies R.M."/>
            <person name="Davis P."/>
            <person name="Dougan G."/>
            <person name="Feltwell T."/>
            <person name="Hamlin N."/>
            <person name="Holroyd S."/>
            <person name="Jagels K."/>
            <person name="Karlyshev A.V."/>
            <person name="Leather S."/>
            <person name="Moule S."/>
            <person name="Oyston P.C.F."/>
            <person name="Quail M.A."/>
            <person name="Rutherford K.M."/>
            <person name="Simmonds M."/>
            <person name="Skelton J."/>
            <person name="Stevens K."/>
            <person name="Whitehead S."/>
            <person name="Barrell B.G."/>
        </authorList>
    </citation>
    <scope>NUCLEOTIDE SEQUENCE [LARGE SCALE GENOMIC DNA]</scope>
    <source>
        <strain>CO-92 / Biovar Orientalis</strain>
    </source>
</reference>
<reference key="2">
    <citation type="journal article" date="2002" name="J. Bacteriol.">
        <title>Genome sequence of Yersinia pestis KIM.</title>
        <authorList>
            <person name="Deng W."/>
            <person name="Burland V."/>
            <person name="Plunkett G. III"/>
            <person name="Boutin A."/>
            <person name="Mayhew G.F."/>
            <person name="Liss P."/>
            <person name="Perna N.T."/>
            <person name="Rose D.J."/>
            <person name="Mau B."/>
            <person name="Zhou S."/>
            <person name="Schwartz D.C."/>
            <person name="Fetherston J.D."/>
            <person name="Lindler L.E."/>
            <person name="Brubaker R.R."/>
            <person name="Plano G.V."/>
            <person name="Straley S.C."/>
            <person name="McDonough K.A."/>
            <person name="Nilles M.L."/>
            <person name="Matson J.S."/>
            <person name="Blattner F.R."/>
            <person name="Perry R.D."/>
        </authorList>
    </citation>
    <scope>NUCLEOTIDE SEQUENCE [LARGE SCALE GENOMIC DNA]</scope>
    <source>
        <strain>KIM10+ / Biovar Mediaevalis</strain>
    </source>
</reference>
<reference key="3">
    <citation type="journal article" date="2004" name="DNA Res.">
        <title>Complete genome sequence of Yersinia pestis strain 91001, an isolate avirulent to humans.</title>
        <authorList>
            <person name="Song Y."/>
            <person name="Tong Z."/>
            <person name="Wang J."/>
            <person name="Wang L."/>
            <person name="Guo Z."/>
            <person name="Han Y."/>
            <person name="Zhang J."/>
            <person name="Pei D."/>
            <person name="Zhou D."/>
            <person name="Qin H."/>
            <person name="Pang X."/>
            <person name="Han Y."/>
            <person name="Zhai J."/>
            <person name="Li M."/>
            <person name="Cui B."/>
            <person name="Qi Z."/>
            <person name="Jin L."/>
            <person name="Dai R."/>
            <person name="Chen F."/>
            <person name="Li S."/>
            <person name="Ye C."/>
            <person name="Du Z."/>
            <person name="Lin W."/>
            <person name="Wang J."/>
            <person name="Yu J."/>
            <person name="Yang H."/>
            <person name="Wang J."/>
            <person name="Huang P."/>
            <person name="Yang R."/>
        </authorList>
    </citation>
    <scope>NUCLEOTIDE SEQUENCE [LARGE SCALE GENOMIC DNA]</scope>
    <source>
        <strain>91001 / Biovar Mediaevalis</strain>
    </source>
</reference>
<evidence type="ECO:0000255" key="1">
    <source>
        <dbReference type="HAMAP-Rule" id="MF_00114"/>
    </source>
</evidence>
<evidence type="ECO:0000305" key="2"/>
<feature type="chain" id="PRO_0000057285" description="Deoxyribose-phosphate aldolase 1">
    <location>
        <begin position="1"/>
        <end position="223"/>
    </location>
</feature>
<feature type="active site" description="Proton donor/acceptor" evidence="1">
    <location>
        <position position="91"/>
    </location>
</feature>
<feature type="active site" description="Schiff-base intermediate with acetaldehyde" evidence="1">
    <location>
        <position position="153"/>
    </location>
</feature>
<feature type="active site" description="Proton donor/acceptor" evidence="1">
    <location>
        <position position="182"/>
    </location>
</feature>
<gene>
    <name evidence="1" type="primary">deoC1</name>
    <name type="synonym">dra</name>
    <name type="ordered locus">YPO1323</name>
    <name type="ordered locus">y2860</name>
    <name type="ordered locus">YP_1269</name>
</gene>
<dbReference type="EC" id="4.1.2.4" evidence="1"/>
<dbReference type="EMBL" id="AL590842">
    <property type="protein sequence ID" value="CAL19976.1"/>
    <property type="molecule type" value="Genomic_DNA"/>
</dbReference>
<dbReference type="EMBL" id="AE009952">
    <property type="protein sequence ID" value="AAM86411.1"/>
    <property type="molecule type" value="Genomic_DNA"/>
</dbReference>
<dbReference type="EMBL" id="AE017042">
    <property type="protein sequence ID" value="AAS61512.1"/>
    <property type="molecule type" value="Genomic_DNA"/>
</dbReference>
<dbReference type="PIR" id="AF0161">
    <property type="entry name" value="AF0161"/>
</dbReference>
<dbReference type="RefSeq" id="YP_002346348.1">
    <property type="nucleotide sequence ID" value="NC_003143.1"/>
</dbReference>
<dbReference type="SMR" id="Q8ZGH4"/>
<dbReference type="IntAct" id="Q8ZGH4">
    <property type="interactions" value="1"/>
</dbReference>
<dbReference type="STRING" id="214092.YPO1323"/>
<dbReference type="PaxDb" id="214092-YPO1323"/>
<dbReference type="DNASU" id="1147807"/>
<dbReference type="EnsemblBacteria" id="AAS61512">
    <property type="protein sequence ID" value="AAS61512"/>
    <property type="gene ID" value="YP_1269"/>
</dbReference>
<dbReference type="KEGG" id="ype:YPO1323"/>
<dbReference type="KEGG" id="ypk:y2860"/>
<dbReference type="KEGG" id="ypm:YP_1269"/>
<dbReference type="PATRIC" id="fig|214092.21.peg.1638"/>
<dbReference type="eggNOG" id="COG0274">
    <property type="taxonomic scope" value="Bacteria"/>
</dbReference>
<dbReference type="HOGENOM" id="CLU_053595_0_1_6"/>
<dbReference type="OMA" id="AAYCVNP"/>
<dbReference type="OrthoDB" id="6579831at2"/>
<dbReference type="UniPathway" id="UPA00002">
    <property type="reaction ID" value="UER00468"/>
</dbReference>
<dbReference type="Proteomes" id="UP000000815">
    <property type="component" value="Chromosome"/>
</dbReference>
<dbReference type="Proteomes" id="UP000001019">
    <property type="component" value="Chromosome"/>
</dbReference>
<dbReference type="Proteomes" id="UP000002490">
    <property type="component" value="Chromosome"/>
</dbReference>
<dbReference type="GO" id="GO:0005737">
    <property type="term" value="C:cytoplasm"/>
    <property type="evidence" value="ECO:0007669"/>
    <property type="project" value="UniProtKB-SubCell"/>
</dbReference>
<dbReference type="GO" id="GO:0004139">
    <property type="term" value="F:deoxyribose-phosphate aldolase activity"/>
    <property type="evidence" value="ECO:0000318"/>
    <property type="project" value="GO_Central"/>
</dbReference>
<dbReference type="GO" id="GO:0006018">
    <property type="term" value="P:2-deoxyribose 1-phosphate catabolic process"/>
    <property type="evidence" value="ECO:0007669"/>
    <property type="project" value="UniProtKB-UniRule"/>
</dbReference>
<dbReference type="GO" id="GO:0016052">
    <property type="term" value="P:carbohydrate catabolic process"/>
    <property type="evidence" value="ECO:0000318"/>
    <property type="project" value="GO_Central"/>
</dbReference>
<dbReference type="GO" id="GO:0009264">
    <property type="term" value="P:deoxyribonucleotide catabolic process"/>
    <property type="evidence" value="ECO:0000318"/>
    <property type="project" value="GO_Central"/>
</dbReference>
<dbReference type="CDD" id="cd00959">
    <property type="entry name" value="DeoC"/>
    <property type="match status" value="1"/>
</dbReference>
<dbReference type="FunFam" id="3.20.20.70:FF:000044">
    <property type="entry name" value="Deoxyribose-phosphate aldolase"/>
    <property type="match status" value="1"/>
</dbReference>
<dbReference type="Gene3D" id="3.20.20.70">
    <property type="entry name" value="Aldolase class I"/>
    <property type="match status" value="1"/>
</dbReference>
<dbReference type="HAMAP" id="MF_00114">
    <property type="entry name" value="DeoC_type1"/>
    <property type="match status" value="1"/>
</dbReference>
<dbReference type="InterPro" id="IPR013785">
    <property type="entry name" value="Aldolase_TIM"/>
</dbReference>
<dbReference type="InterPro" id="IPR011343">
    <property type="entry name" value="DeoC"/>
</dbReference>
<dbReference type="InterPro" id="IPR002915">
    <property type="entry name" value="DeoC/FbaB/LacD_aldolase"/>
</dbReference>
<dbReference type="InterPro" id="IPR028581">
    <property type="entry name" value="DeoC_typeI"/>
</dbReference>
<dbReference type="NCBIfam" id="TIGR00126">
    <property type="entry name" value="deoC"/>
    <property type="match status" value="1"/>
</dbReference>
<dbReference type="PANTHER" id="PTHR10889">
    <property type="entry name" value="DEOXYRIBOSE-PHOSPHATE ALDOLASE"/>
    <property type="match status" value="1"/>
</dbReference>
<dbReference type="PANTHER" id="PTHR10889:SF1">
    <property type="entry name" value="DEOXYRIBOSE-PHOSPHATE ALDOLASE"/>
    <property type="match status" value="1"/>
</dbReference>
<dbReference type="Pfam" id="PF01791">
    <property type="entry name" value="DeoC"/>
    <property type="match status" value="1"/>
</dbReference>
<dbReference type="PIRSF" id="PIRSF001357">
    <property type="entry name" value="DeoC"/>
    <property type="match status" value="1"/>
</dbReference>
<dbReference type="SMART" id="SM01133">
    <property type="entry name" value="DeoC"/>
    <property type="match status" value="1"/>
</dbReference>
<dbReference type="SUPFAM" id="SSF51569">
    <property type="entry name" value="Aldolase"/>
    <property type="match status" value="1"/>
</dbReference>
<sequence>MTTNYAHYIDHTLLAMDATEAQIIKLCEEAKQHHFYAVCVNSGYVPVAAQQLAGSSVKVCSVIGFPLGAGLTAAKAFEAQAAINAGAQEIDMVINVGWLKSGKIADVKADIKAVRDNCAATPLKVILETCLLSDEQIVQVCEMCRELDVAFVKTSTGFSTGGAKEEHVKLMRATVGPVMGVKASGAVRDRATAETMIQAGATRIGTSSGVAIVSGQQAAASGY</sequence>